<reference key="1">
    <citation type="submission" date="2007-06" db="EMBL/GenBank/DDBJ databases">
        <authorList>
            <person name="Dodson R.J."/>
            <person name="Harkins D."/>
            <person name="Paulsen I.T."/>
        </authorList>
    </citation>
    <scope>NUCLEOTIDE SEQUENCE [LARGE SCALE GENOMIC DNA]</scope>
    <source>
        <strain>DSM 24068 / PA7</strain>
    </source>
</reference>
<sequence>MAEAQKTVRTLTGRVVSDKMDKTVTVLIERRVKHPIYGKYVKRSTKLHAHDESNQCRIGDLVTIRETRPLAKTKAWTLVDIVERAVEV</sequence>
<protein>
    <recommendedName>
        <fullName evidence="1">Small ribosomal subunit protein uS17</fullName>
    </recommendedName>
    <alternativeName>
        <fullName evidence="2">30S ribosomal protein S17</fullName>
    </alternativeName>
</protein>
<gene>
    <name evidence="1" type="primary">rpsQ</name>
    <name type="ordered locus">PSPA7_0846</name>
</gene>
<feature type="chain" id="PRO_1000054998" description="Small ribosomal subunit protein uS17">
    <location>
        <begin position="1"/>
        <end position="88"/>
    </location>
</feature>
<name>RS17_PSEP7</name>
<proteinExistence type="inferred from homology"/>
<keyword id="KW-0687">Ribonucleoprotein</keyword>
<keyword id="KW-0689">Ribosomal protein</keyword>
<keyword id="KW-0694">RNA-binding</keyword>
<keyword id="KW-0699">rRNA-binding</keyword>
<accession>A6UZJ7</accession>
<organism>
    <name type="scientific">Pseudomonas paraeruginosa (strain DSM 24068 / PA7)</name>
    <name type="common">Pseudomonas aeruginosa (strain PA7)</name>
    <dbReference type="NCBI Taxonomy" id="381754"/>
    <lineage>
        <taxon>Bacteria</taxon>
        <taxon>Pseudomonadati</taxon>
        <taxon>Pseudomonadota</taxon>
        <taxon>Gammaproteobacteria</taxon>
        <taxon>Pseudomonadales</taxon>
        <taxon>Pseudomonadaceae</taxon>
        <taxon>Pseudomonas</taxon>
        <taxon>Pseudomonas paraeruginosa</taxon>
    </lineage>
</organism>
<comment type="function">
    <text evidence="1">One of the primary rRNA binding proteins, it binds specifically to the 5'-end of 16S ribosomal RNA.</text>
</comment>
<comment type="subunit">
    <text evidence="1">Part of the 30S ribosomal subunit.</text>
</comment>
<comment type="similarity">
    <text evidence="1">Belongs to the universal ribosomal protein uS17 family.</text>
</comment>
<dbReference type="EMBL" id="CP000744">
    <property type="protein sequence ID" value="ABR85107.1"/>
    <property type="molecule type" value="Genomic_DNA"/>
</dbReference>
<dbReference type="RefSeq" id="WP_003093717.1">
    <property type="nucleotide sequence ID" value="NC_009656.1"/>
</dbReference>
<dbReference type="SMR" id="A6UZJ7"/>
<dbReference type="GeneID" id="77219207"/>
<dbReference type="KEGG" id="pap:PSPA7_0846"/>
<dbReference type="HOGENOM" id="CLU_073626_1_1_6"/>
<dbReference type="Proteomes" id="UP000001582">
    <property type="component" value="Chromosome"/>
</dbReference>
<dbReference type="GO" id="GO:0022627">
    <property type="term" value="C:cytosolic small ribosomal subunit"/>
    <property type="evidence" value="ECO:0007669"/>
    <property type="project" value="TreeGrafter"/>
</dbReference>
<dbReference type="GO" id="GO:0019843">
    <property type="term" value="F:rRNA binding"/>
    <property type="evidence" value="ECO:0007669"/>
    <property type="project" value="UniProtKB-UniRule"/>
</dbReference>
<dbReference type="GO" id="GO:0003735">
    <property type="term" value="F:structural constituent of ribosome"/>
    <property type="evidence" value="ECO:0007669"/>
    <property type="project" value="InterPro"/>
</dbReference>
<dbReference type="GO" id="GO:0006412">
    <property type="term" value="P:translation"/>
    <property type="evidence" value="ECO:0007669"/>
    <property type="project" value="UniProtKB-UniRule"/>
</dbReference>
<dbReference type="CDD" id="cd00364">
    <property type="entry name" value="Ribosomal_uS17"/>
    <property type="match status" value="1"/>
</dbReference>
<dbReference type="FunFam" id="2.40.50.140:FF:000014">
    <property type="entry name" value="30S ribosomal protein S17"/>
    <property type="match status" value="1"/>
</dbReference>
<dbReference type="Gene3D" id="2.40.50.140">
    <property type="entry name" value="Nucleic acid-binding proteins"/>
    <property type="match status" value="1"/>
</dbReference>
<dbReference type="HAMAP" id="MF_01345_B">
    <property type="entry name" value="Ribosomal_uS17_B"/>
    <property type="match status" value="1"/>
</dbReference>
<dbReference type="InterPro" id="IPR012340">
    <property type="entry name" value="NA-bd_OB-fold"/>
</dbReference>
<dbReference type="InterPro" id="IPR000266">
    <property type="entry name" value="Ribosomal_uS17"/>
</dbReference>
<dbReference type="InterPro" id="IPR019984">
    <property type="entry name" value="Ribosomal_uS17_bact/chlr"/>
</dbReference>
<dbReference type="NCBIfam" id="NF004123">
    <property type="entry name" value="PRK05610.1"/>
    <property type="match status" value="1"/>
</dbReference>
<dbReference type="NCBIfam" id="TIGR03635">
    <property type="entry name" value="uS17_bact"/>
    <property type="match status" value="1"/>
</dbReference>
<dbReference type="PANTHER" id="PTHR10744">
    <property type="entry name" value="40S RIBOSOMAL PROTEIN S11 FAMILY MEMBER"/>
    <property type="match status" value="1"/>
</dbReference>
<dbReference type="PANTHER" id="PTHR10744:SF1">
    <property type="entry name" value="SMALL RIBOSOMAL SUBUNIT PROTEIN US17M"/>
    <property type="match status" value="1"/>
</dbReference>
<dbReference type="Pfam" id="PF00366">
    <property type="entry name" value="Ribosomal_S17"/>
    <property type="match status" value="1"/>
</dbReference>
<dbReference type="PRINTS" id="PR00973">
    <property type="entry name" value="RIBOSOMALS17"/>
</dbReference>
<dbReference type="SUPFAM" id="SSF50249">
    <property type="entry name" value="Nucleic acid-binding proteins"/>
    <property type="match status" value="1"/>
</dbReference>
<evidence type="ECO:0000255" key="1">
    <source>
        <dbReference type="HAMAP-Rule" id="MF_01345"/>
    </source>
</evidence>
<evidence type="ECO:0000305" key="2"/>